<keyword id="KW-0217">Developmental protein</keyword>
<keyword id="KW-0221">Differentiation</keyword>
<keyword id="KW-0238">DNA-binding</keyword>
<keyword id="KW-0371">Homeobox</keyword>
<keyword id="KW-0524">Neurogenesis</keyword>
<keyword id="KW-0539">Nucleus</keyword>
<keyword id="KW-1185">Reference proteome</keyword>
<keyword id="KW-0804">Transcription</keyword>
<keyword id="KW-0805">Transcription regulation</keyword>
<evidence type="ECO:0000250" key="1">
    <source>
        <dbReference type="UniProtKB" id="Q96QS3"/>
    </source>
</evidence>
<evidence type="ECO:0000255" key="2">
    <source>
        <dbReference type="PROSITE-ProRule" id="PRU00108"/>
    </source>
</evidence>
<evidence type="ECO:0000255" key="3">
    <source>
        <dbReference type="PROSITE-ProRule" id="PRU00138"/>
    </source>
</evidence>
<evidence type="ECO:0000256" key="4">
    <source>
        <dbReference type="SAM" id="MobiDB-lite"/>
    </source>
</evidence>
<evidence type="ECO:0000269" key="5">
    <source>
    </source>
</evidence>
<evidence type="ECO:0000269" key="6">
    <source>
    </source>
</evidence>
<evidence type="ECO:0000269" key="7">
    <source>
    </source>
</evidence>
<evidence type="ECO:0000305" key="8"/>
<organism>
    <name type="scientific">Mus musculus</name>
    <name type="common">Mouse</name>
    <dbReference type="NCBI Taxonomy" id="10090"/>
    <lineage>
        <taxon>Eukaryota</taxon>
        <taxon>Metazoa</taxon>
        <taxon>Chordata</taxon>
        <taxon>Craniata</taxon>
        <taxon>Vertebrata</taxon>
        <taxon>Euteleostomi</taxon>
        <taxon>Mammalia</taxon>
        <taxon>Eutheria</taxon>
        <taxon>Euarchontoglires</taxon>
        <taxon>Glires</taxon>
        <taxon>Rodentia</taxon>
        <taxon>Myomorpha</taxon>
        <taxon>Muroidea</taxon>
        <taxon>Muridae</taxon>
        <taxon>Murinae</taxon>
        <taxon>Mus</taxon>
        <taxon>Mus</taxon>
    </lineage>
</organism>
<sequence length="564" mass="58490">MSNQYQEEGCSERPECKSKSPTLLSSYCIDSILGRRSPCKMRLLGAAQSLPAPLASRADQEKAMQGSPKSSSAPFEAELHLPPKLRRLYGPGGGRLLQGAAAAAAAAAAAAAAATATGTAGPRGEVPPPPPPAARPGERQDSAGAVAAAAAAAAWDTLKISQAPQVSISRSKSYRENGAPFVPPPPALDELSGPGGVAHPEERLSAASGPGSAPAAGGGTGAEDDEEELLEDEEDEEEEEELLEDDDEELLEDDARALLKEPRRCSVATTGTVAAAAAAAAAAVATEGGELSPKEELLLHPEDAEGKDGEDSVCLSAGSDSEEGLLKRKQRRYRTTFTSYQLEELERAFQKTHYPDVFTREELAMRLDLTEARVQVWFQNRRAKWRKREKAGAQTHPPGLPFPGPLSATHPLSPYLDASPFPPHHPALDSAWTAAAAAAAAAFPSLPPPPGSASLPPSGAPLGLSTFLGAAVFRHPAFISPAFGRLFSTMAPLTSASTAAALLRQPTPAVEGAVASGALADPATAAADRRASSIAALRLKAKEHAAQLTQLNILPGTSTGKEVC</sequence>
<feature type="chain" id="PRO_0000048820" description="Homeobox protein ARX">
    <location>
        <begin position="1"/>
        <end position="564"/>
    </location>
</feature>
<feature type="DNA-binding region" description="Homeobox" evidence="2">
    <location>
        <begin position="330"/>
        <end position="389"/>
    </location>
</feature>
<feature type="region of interest" description="Disordered" evidence="4">
    <location>
        <begin position="1"/>
        <end position="21"/>
    </location>
</feature>
<feature type="region of interest" description="Disordered" evidence="4">
    <location>
        <begin position="54"/>
        <end position="79"/>
    </location>
</feature>
<feature type="region of interest" description="Disordered" evidence="4">
    <location>
        <begin position="111"/>
        <end position="264"/>
    </location>
</feature>
<feature type="short sequence motif" description="OAR" evidence="3">
    <location>
        <begin position="532"/>
        <end position="545"/>
    </location>
</feature>
<feature type="compositionally biased region" description="Low complexity" evidence="4">
    <location>
        <begin position="111"/>
        <end position="124"/>
    </location>
</feature>
<feature type="compositionally biased region" description="Pro residues" evidence="4">
    <location>
        <begin position="125"/>
        <end position="134"/>
    </location>
</feature>
<feature type="compositionally biased region" description="Low complexity" evidence="4">
    <location>
        <begin position="143"/>
        <end position="154"/>
    </location>
</feature>
<feature type="compositionally biased region" description="Polar residues" evidence="4">
    <location>
        <begin position="159"/>
        <end position="171"/>
    </location>
</feature>
<feature type="compositionally biased region" description="Low complexity" evidence="4">
    <location>
        <begin position="205"/>
        <end position="215"/>
    </location>
</feature>
<feature type="compositionally biased region" description="Acidic residues" evidence="4">
    <location>
        <begin position="222"/>
        <end position="252"/>
    </location>
</feature>
<feature type="compositionally biased region" description="Basic and acidic residues" evidence="4">
    <location>
        <begin position="253"/>
        <end position="264"/>
    </location>
</feature>
<feature type="sequence conflict" description="In Ref. 3; BAA85852." evidence="8" ref="3">
    <original>D</original>
    <variation>E</variation>
    <location>
        <position position="59"/>
    </location>
</feature>
<feature type="sequence conflict" description="In Ref. 3; BAA85852." evidence="8" ref="3">
    <original>P</original>
    <variation>H</variation>
    <location>
        <position position="127"/>
    </location>
</feature>
<feature type="sequence conflict" description="In Ref. 3; BAA85852." evidence="8" ref="3">
    <original>S</original>
    <variation>A</variation>
    <location>
        <position position="316"/>
    </location>
</feature>
<feature type="sequence conflict" description="In Ref. 3; BAA85852." evidence="8" ref="3">
    <location>
        <position position="360"/>
    </location>
</feature>
<feature type="sequence conflict" description="In Ref. 3; BAA85852." evidence="8" ref="3">
    <location>
        <position position="485"/>
    </location>
</feature>
<comment type="function">
    <text evidence="1 5 6 7">Transcription factor (By similarity). Binds to specific sequence motif 5'-TAATTA-3' in regulatory elements of target genes, such as histone demethylase KDM5C (By similarity). Positively modulates transcription of KDM5C (PubMed:31691806). Activates expression of KDM5C synergistically with histone lysine demethylase PHF8 and perhaps in competition with transcription regulator ZNF711; synergy may be related to enrichment of histone H3K4me3 in regulatory elements (By similarity). Required for normal brain development (PubMed:12379852). Plays a role in neuronal proliferation, interneuronal migration and differentiation in the embryonic forebrain (PubMed:12379852, PubMed:31691806). May also be involved in axonal guidance in the floor plate (PubMed:9256348).</text>
</comment>
<comment type="subcellular location">
    <subcellularLocation>
        <location evidence="2 3">Nucleus</location>
    </subcellularLocation>
</comment>
<comment type="developmental stage">
    <text evidence="5 7">Expressed in the developing forebrain and also in the floor plate (PubMed:9256348). Expressed in the interstitium of the male gonad at 14.5 dpc, but only weakly in a region of the female gonad proximal to the mesonephros (PubMed:12379852).</text>
</comment>
<comment type="disruption phenotype">
    <text evidence="5 6">Hemizygous knockout males were born at 19.5 dpc and died within a half day (PubMed:12379852). Neonatal males have small brains, small olfactory bulbs, small testes, hypoplasia of the seminal vesicle and abnormally enlarged seminiferous tubules (PubMed:12379852). Abnormal morphology in each of the developing brain regions in which ARX is normally expressed (PubMed:12379852). Suppressed proliferation and nearly normal migration of neuroepithelial cells in the neocortex (PubMed:12379852). Aberrant formation of many nerve fiber tracts at 19.5 dpc (PubMed:12379852). Abnormal primary migration of GABAergic interneurons from the ganglionic eminence (PubMed:12379852). Abolished expression of wingless-related WNT8B and LIM homeobox protein LHX9 in the thalamic eminence at 12.5 dpc, and decreased expression of DLX1 in the ventral thalamus at 12.5 dpc (PubMed:12379852). Testes have a dysplastic interstitium, probably owing to a considerable decrease in cells containing an abundant cytoplasm as the interstitium is occupied predominantly by fibroblast-like cells (PubMed:12379852). Expression of Leydig cell marker HSD3B1 is severely diminished in the interstitial region of testes, suggesting that Leydig cell differentiation is blocked (PubMed:12379852). Expression of KDM5C is reduced at both mRNA and protein levels (PubMed:31691806). Increased expression of SYN1, SCN2A and some isoforms of BDNF (PubMed:31691806).</text>
</comment>
<comment type="similarity">
    <text evidence="8">Belongs to the paired homeobox family. Bicoid subfamily.</text>
</comment>
<accession>O35085</accession>
<accession>A2A4G9</accession>
<accession>Q9QYT4</accession>
<reference key="1">
    <citation type="journal article" date="1997" name="Mech. Dev.">
        <title>Expression of a novel aristaless related homeobox gene 'Arx' in the vertebrate telencephalon, diencephalon and floor plate.</title>
        <authorList>
            <person name="Miura H."/>
            <person name="Yanazawa M."/>
            <person name="Kato K."/>
            <person name="Kitamura K."/>
        </authorList>
    </citation>
    <scope>FUNCTION</scope>
    <scope>NUCLEOTIDE SEQUENCE [MRNA]</scope>
</reference>
<reference key="2">
    <citation type="submission" date="2002-08" db="EMBL/GenBank/DDBJ databases">
        <authorList>
            <person name="Kitamura K."/>
        </authorList>
    </citation>
    <scope>SEQUENCE REVISION TO 391 AND 442</scope>
</reference>
<reference key="3">
    <citation type="thesis" date="1999" institute="Nara Institute of Science and Technology" country="Japan">
        <title>Homeobox genes and nervous development.</title>
        <authorList>
            <person name="Ohsaki K."/>
        </authorList>
    </citation>
    <scope>NUCLEOTIDE SEQUENCE [GENOMIC DNA]</scope>
    <source>
        <strain>BALB/cJ</strain>
    </source>
</reference>
<reference key="4">
    <citation type="journal article" date="2009" name="PLoS Biol.">
        <title>Lineage-specific biology revealed by a finished genome assembly of the mouse.</title>
        <authorList>
            <person name="Church D.M."/>
            <person name="Goodstadt L."/>
            <person name="Hillier L.W."/>
            <person name="Zody M.C."/>
            <person name="Goldstein S."/>
            <person name="She X."/>
            <person name="Bult C.J."/>
            <person name="Agarwala R."/>
            <person name="Cherry J.L."/>
            <person name="DiCuccio M."/>
            <person name="Hlavina W."/>
            <person name="Kapustin Y."/>
            <person name="Meric P."/>
            <person name="Maglott D."/>
            <person name="Birtle Z."/>
            <person name="Marques A.C."/>
            <person name="Graves T."/>
            <person name="Zhou S."/>
            <person name="Teague B."/>
            <person name="Potamousis K."/>
            <person name="Churas C."/>
            <person name="Place M."/>
            <person name="Herschleb J."/>
            <person name="Runnheim R."/>
            <person name="Forrest D."/>
            <person name="Amos-Landgraf J."/>
            <person name="Schwartz D.C."/>
            <person name="Cheng Z."/>
            <person name="Lindblad-Toh K."/>
            <person name="Eichler E.E."/>
            <person name="Ponting C.P."/>
        </authorList>
    </citation>
    <scope>NUCLEOTIDE SEQUENCE [LARGE SCALE GENOMIC DNA]</scope>
    <source>
        <strain>C57BL/6J</strain>
    </source>
</reference>
<reference key="5">
    <citation type="journal article" date="2004" name="Genome Res.">
        <title>The status, quality, and expansion of the NIH full-length cDNA project: the Mammalian Gene Collection (MGC).</title>
        <authorList>
            <consortium name="The MGC Project Team"/>
        </authorList>
    </citation>
    <scope>NUCLEOTIDE SEQUENCE [LARGE SCALE MRNA]</scope>
    <source>
        <strain>C57BL/6J</strain>
        <tissue>Brain</tissue>
    </source>
</reference>
<reference key="6">
    <citation type="journal article" date="2010" name="Cell">
        <title>A tissue-specific atlas of mouse protein phosphorylation and expression.</title>
        <authorList>
            <person name="Huttlin E.L."/>
            <person name="Jedrychowski M.P."/>
            <person name="Elias J.E."/>
            <person name="Goswami T."/>
            <person name="Rad R."/>
            <person name="Beausoleil S.A."/>
            <person name="Villen J."/>
            <person name="Haas W."/>
            <person name="Sowa M.E."/>
            <person name="Gygi S.P."/>
        </authorList>
    </citation>
    <scope>IDENTIFICATION BY MASS SPECTROMETRY [LARGE SCALE ANALYSIS]</scope>
    <source>
        <tissue>Brain</tissue>
        <tissue>Testis</tissue>
    </source>
</reference>
<reference key="7">
    <citation type="journal article" date="2002" name="Nat. Genet.">
        <title>Mutation of ARX causes abnormal development of forebrain and testes in mice and X-linked lissencephaly with abnormal genitalia in humans.</title>
        <authorList>
            <person name="Kitamura K."/>
            <person name="Yanazawa M."/>
            <person name="Sugiyama N."/>
            <person name="Miura H."/>
            <person name="Iizuka-Kogo A."/>
            <person name="Kusaka M."/>
            <person name="Omichi K."/>
            <person name="Suzuki R."/>
            <person name="Kato-Fukui Y."/>
            <person name="Kamiirisa K."/>
            <person name="Matsuo M."/>
            <person name="Kamijo S."/>
            <person name="Kasahara M."/>
            <person name="Yoshioka H."/>
            <person name="Ogata T."/>
            <person name="Fukuda T."/>
            <person name="Kondo I."/>
            <person name="Kato M."/>
            <person name="Dobyns W.B."/>
            <person name="Yokoyama M."/>
            <person name="Morohashi K."/>
        </authorList>
    </citation>
    <scope>FUNCTION</scope>
    <scope>DEVELOPMENTAL STAGE</scope>
    <scope>DISRUPTION PHENOTYPE</scope>
</reference>
<reference key="8">
    <citation type="journal article" date="2019" name="Hum. Mol. Genet.">
        <title>Histone demethylase KDM5C is a SAHA-sensitive central hub at the crossroads of transcriptional axes involved in multiple neurodevelopmental disorders.</title>
        <authorList>
            <person name="Poeta L."/>
            <person name="Padula A."/>
            <person name="Attianese B."/>
            <person name="Valentino M."/>
            <person name="Verrillo L."/>
            <person name="Filosa S."/>
            <person name="Shoubridge C."/>
            <person name="Barra A."/>
            <person name="Schwartz C.E."/>
            <person name="Christensen J."/>
            <person name="van Bokhoven H."/>
            <person name="Helin K."/>
            <person name="Lioi M.B."/>
            <person name="Collombat P."/>
            <person name="Gecz J."/>
            <person name="Altucci L."/>
            <person name="Di Schiavi E."/>
            <person name="Miano M.G."/>
        </authorList>
    </citation>
    <scope>FUNCTION</scope>
    <scope>DISRUPTION PHENOTYPE</scope>
</reference>
<protein>
    <recommendedName>
        <fullName>Homeobox protein ARX</fullName>
    </recommendedName>
    <alternativeName>
        <fullName>Aristaless-related homeobox</fullName>
    </alternativeName>
</protein>
<proteinExistence type="evidence at protein level"/>
<gene>
    <name type="primary">Arx</name>
</gene>
<dbReference type="EMBL" id="AB006103">
    <property type="protein sequence ID" value="BAA28284.2"/>
    <property type="molecule type" value="mRNA"/>
</dbReference>
<dbReference type="EMBL" id="AB026674">
    <property type="protein sequence ID" value="BAA85852.1"/>
    <property type="molecule type" value="Genomic_DNA"/>
</dbReference>
<dbReference type="EMBL" id="AL590876">
    <property type="status" value="NOT_ANNOTATED_CDS"/>
    <property type="molecule type" value="Genomic_DNA"/>
</dbReference>
<dbReference type="EMBL" id="BC052033">
    <property type="protein sequence ID" value="AAH52033.1"/>
    <property type="molecule type" value="mRNA"/>
</dbReference>
<dbReference type="CCDS" id="CCDS30271.1"/>
<dbReference type="RefSeq" id="NP_001292869.1">
    <property type="nucleotide sequence ID" value="NM_001305940.1"/>
</dbReference>
<dbReference type="RefSeq" id="NP_031518.2">
    <property type="nucleotide sequence ID" value="NM_007492.4"/>
</dbReference>
<dbReference type="SMR" id="O35085"/>
<dbReference type="FunCoup" id="O35085">
    <property type="interactions" value="1448"/>
</dbReference>
<dbReference type="STRING" id="10090.ENSMUSP00000049039"/>
<dbReference type="iPTMnet" id="O35085"/>
<dbReference type="PhosphoSitePlus" id="O35085"/>
<dbReference type="PaxDb" id="10090-ENSMUSP00000049039"/>
<dbReference type="ProteomicsDB" id="277241"/>
<dbReference type="ABCD" id="O35085">
    <property type="antibodies" value="1 sequenced antibody"/>
</dbReference>
<dbReference type="Antibodypedia" id="24612">
    <property type="antibodies" value="405 antibodies from 32 providers"/>
</dbReference>
<dbReference type="DNASU" id="11878"/>
<dbReference type="Ensembl" id="ENSMUST00000046565.13">
    <property type="protein sequence ID" value="ENSMUSP00000049039.8"/>
    <property type="gene ID" value="ENSMUSG00000035277.16"/>
</dbReference>
<dbReference type="Ensembl" id="ENSMUST00000113947.6">
    <property type="protein sequence ID" value="ENSMUSP00000109580.3"/>
    <property type="gene ID" value="ENSMUSG00000035277.16"/>
</dbReference>
<dbReference type="GeneID" id="11878"/>
<dbReference type="KEGG" id="mmu:11878"/>
<dbReference type="UCSC" id="uc009tsq.1">
    <property type="organism name" value="mouse"/>
</dbReference>
<dbReference type="AGR" id="MGI:1097716"/>
<dbReference type="CTD" id="170302"/>
<dbReference type="MGI" id="MGI:1097716">
    <property type="gene designation" value="Arx"/>
</dbReference>
<dbReference type="VEuPathDB" id="HostDB:ENSMUSG00000035277"/>
<dbReference type="eggNOG" id="KOG0490">
    <property type="taxonomic scope" value="Eukaryota"/>
</dbReference>
<dbReference type="GeneTree" id="ENSGT00940000160633"/>
<dbReference type="HOGENOM" id="CLU_047013_7_0_1"/>
<dbReference type="InParanoid" id="O35085"/>
<dbReference type="OMA" id="SYREHAL"/>
<dbReference type="OrthoDB" id="6159439at2759"/>
<dbReference type="PhylomeDB" id="O35085"/>
<dbReference type="TreeFam" id="TF350743"/>
<dbReference type="BioGRID-ORCS" id="11878">
    <property type="hits" value="1 hit in 61 CRISPR screens"/>
</dbReference>
<dbReference type="PRO" id="PR:O35085"/>
<dbReference type="Proteomes" id="UP000000589">
    <property type="component" value="Chromosome X"/>
</dbReference>
<dbReference type="RNAct" id="O35085">
    <property type="molecule type" value="protein"/>
</dbReference>
<dbReference type="Bgee" id="ENSMUSG00000035277">
    <property type="expression patterns" value="Expressed in rostral migratory stream and 97 other cell types or tissues"/>
</dbReference>
<dbReference type="GO" id="GO:0005634">
    <property type="term" value="C:nucleus"/>
    <property type="evidence" value="ECO:0000305"/>
    <property type="project" value="MGI"/>
</dbReference>
<dbReference type="GO" id="GO:0003682">
    <property type="term" value="F:chromatin binding"/>
    <property type="evidence" value="ECO:0000314"/>
    <property type="project" value="MGI"/>
</dbReference>
<dbReference type="GO" id="GO:0001228">
    <property type="term" value="F:DNA-binding transcription activator activity, RNA polymerase II-specific"/>
    <property type="evidence" value="ECO:0007669"/>
    <property type="project" value="Ensembl"/>
</dbReference>
<dbReference type="GO" id="GO:0000981">
    <property type="term" value="F:DNA-binding transcription factor activity, RNA polymerase II-specific"/>
    <property type="evidence" value="ECO:0000266"/>
    <property type="project" value="MGI"/>
</dbReference>
<dbReference type="GO" id="GO:0001227">
    <property type="term" value="F:DNA-binding transcription repressor activity, RNA polymerase II-specific"/>
    <property type="evidence" value="ECO:0000314"/>
    <property type="project" value="NTNU_SB"/>
</dbReference>
<dbReference type="GO" id="GO:0000978">
    <property type="term" value="F:RNA polymerase II cis-regulatory region sequence-specific DNA binding"/>
    <property type="evidence" value="ECO:0000314"/>
    <property type="project" value="NTNU_SB"/>
</dbReference>
<dbReference type="GO" id="GO:0007411">
    <property type="term" value="P:axon guidance"/>
    <property type="evidence" value="ECO:0000315"/>
    <property type="project" value="MGI"/>
</dbReference>
<dbReference type="GO" id="GO:0021846">
    <property type="term" value="P:cell proliferation in forebrain"/>
    <property type="evidence" value="ECO:0000315"/>
    <property type="project" value="MGI"/>
</dbReference>
<dbReference type="GO" id="GO:0021853">
    <property type="term" value="P:cerebral cortex GABAergic interneuron migration"/>
    <property type="evidence" value="ECO:0000315"/>
    <property type="project" value="MGI"/>
</dbReference>
<dbReference type="GO" id="GO:0021800">
    <property type="term" value="P:cerebral cortex tangential migration"/>
    <property type="evidence" value="ECO:0000315"/>
    <property type="project" value="MGI"/>
</dbReference>
<dbReference type="GO" id="GO:0021831">
    <property type="term" value="P:embryonic olfactory bulb interneuron precursor migration"/>
    <property type="evidence" value="ECO:0000315"/>
    <property type="project" value="MGI"/>
</dbReference>
<dbReference type="GO" id="GO:0072148">
    <property type="term" value="P:epithelial cell fate commitment"/>
    <property type="evidence" value="ECO:0000315"/>
    <property type="project" value="MGI"/>
</dbReference>
<dbReference type="GO" id="GO:0030900">
    <property type="term" value="P:forebrain development"/>
    <property type="evidence" value="ECO:0000315"/>
    <property type="project" value="MGI"/>
</dbReference>
<dbReference type="GO" id="GO:0021759">
    <property type="term" value="P:globus pallidus development"/>
    <property type="evidence" value="ECO:0000315"/>
    <property type="project" value="MGI"/>
</dbReference>
<dbReference type="GO" id="GO:1904936">
    <property type="term" value="P:interneuron migration"/>
    <property type="evidence" value="ECO:0000315"/>
    <property type="project" value="MGI"/>
</dbReference>
<dbReference type="GO" id="GO:0044241">
    <property type="term" value="P:lipid digestion"/>
    <property type="evidence" value="ECO:0000315"/>
    <property type="project" value="MGI"/>
</dbReference>
<dbReference type="GO" id="GO:0000122">
    <property type="term" value="P:negative regulation of transcription by RNA polymerase II"/>
    <property type="evidence" value="ECO:0000314"/>
    <property type="project" value="NTNU_SB"/>
</dbReference>
<dbReference type="GO" id="GO:0048663">
    <property type="term" value="P:neuron fate commitment"/>
    <property type="evidence" value="ECO:0000315"/>
    <property type="project" value="MGI"/>
</dbReference>
<dbReference type="GO" id="GO:0001764">
    <property type="term" value="P:neuron migration"/>
    <property type="evidence" value="ECO:0000315"/>
    <property type="project" value="MGI"/>
</dbReference>
<dbReference type="GO" id="GO:0021772">
    <property type="term" value="P:olfactory bulb development"/>
    <property type="evidence" value="ECO:0000315"/>
    <property type="project" value="MGI"/>
</dbReference>
<dbReference type="GO" id="GO:0035265">
    <property type="term" value="P:organ growth"/>
    <property type="evidence" value="ECO:0000315"/>
    <property type="project" value="MGI"/>
</dbReference>
<dbReference type="GO" id="GO:0010628">
    <property type="term" value="P:positive regulation of gene expression"/>
    <property type="evidence" value="ECO:0000315"/>
    <property type="project" value="MGI"/>
</dbReference>
<dbReference type="GO" id="GO:0046622">
    <property type="term" value="P:positive regulation of organ growth"/>
    <property type="evidence" value="ECO:0000315"/>
    <property type="project" value="MGI"/>
</dbReference>
<dbReference type="GO" id="GO:0045944">
    <property type="term" value="P:positive regulation of transcription by RNA polymerase II"/>
    <property type="evidence" value="ECO:0000315"/>
    <property type="project" value="UniProtKB"/>
</dbReference>
<dbReference type="GO" id="GO:0050678">
    <property type="term" value="P:regulation of epithelial cell proliferation"/>
    <property type="evidence" value="ECO:0000315"/>
    <property type="project" value="MGI"/>
</dbReference>
<dbReference type="CDD" id="cd00086">
    <property type="entry name" value="homeodomain"/>
    <property type="match status" value="1"/>
</dbReference>
<dbReference type="FunFam" id="1.10.10.60:FF:000102">
    <property type="entry name" value="Aristaless related homeobox"/>
    <property type="match status" value="1"/>
</dbReference>
<dbReference type="Gene3D" id="1.10.10.60">
    <property type="entry name" value="Homeodomain-like"/>
    <property type="match status" value="1"/>
</dbReference>
<dbReference type="InterPro" id="IPR001356">
    <property type="entry name" value="HD"/>
</dbReference>
<dbReference type="InterPro" id="IPR017970">
    <property type="entry name" value="Homeobox_CS"/>
</dbReference>
<dbReference type="InterPro" id="IPR009057">
    <property type="entry name" value="Homeodomain-like_sf"/>
</dbReference>
<dbReference type="InterPro" id="IPR003654">
    <property type="entry name" value="OAR_dom"/>
</dbReference>
<dbReference type="InterPro" id="IPR050649">
    <property type="entry name" value="Paired_Homeobox_TFs"/>
</dbReference>
<dbReference type="PANTHER" id="PTHR24329">
    <property type="entry name" value="HOMEOBOX PROTEIN ARISTALESS"/>
    <property type="match status" value="1"/>
</dbReference>
<dbReference type="PANTHER" id="PTHR24329:SF572">
    <property type="entry name" value="HOMEOBOX PROTEIN ARX"/>
    <property type="match status" value="1"/>
</dbReference>
<dbReference type="Pfam" id="PF00046">
    <property type="entry name" value="Homeodomain"/>
    <property type="match status" value="1"/>
</dbReference>
<dbReference type="Pfam" id="PF03826">
    <property type="entry name" value="OAR"/>
    <property type="match status" value="1"/>
</dbReference>
<dbReference type="SMART" id="SM00389">
    <property type="entry name" value="HOX"/>
    <property type="match status" value="1"/>
</dbReference>
<dbReference type="SUPFAM" id="SSF46689">
    <property type="entry name" value="Homeodomain-like"/>
    <property type="match status" value="1"/>
</dbReference>
<dbReference type="PROSITE" id="PS00027">
    <property type="entry name" value="HOMEOBOX_1"/>
    <property type="match status" value="1"/>
</dbReference>
<dbReference type="PROSITE" id="PS50071">
    <property type="entry name" value="HOMEOBOX_2"/>
    <property type="match status" value="1"/>
</dbReference>
<dbReference type="PROSITE" id="PS50803">
    <property type="entry name" value="OAR"/>
    <property type="match status" value="1"/>
</dbReference>
<name>ARX_MOUSE</name>